<evidence type="ECO:0000256" key="1">
    <source>
        <dbReference type="SAM" id="MobiDB-lite"/>
    </source>
</evidence>
<evidence type="ECO:0000269" key="2">
    <source>
    </source>
</evidence>
<dbReference type="EMBL" id="X07234">
    <property type="protein sequence ID" value="CAA30207.1"/>
    <property type="molecule type" value="Genomic_DNA"/>
</dbReference>
<dbReference type="PIR" id="S03240">
    <property type="entry name" value="S03240"/>
</dbReference>
<dbReference type="RefSeq" id="NP_039805.1">
    <property type="nucleotide sequence ID" value="NC_001338.1"/>
</dbReference>
<dbReference type="SMR" id="P20203"/>
<dbReference type="KEGG" id="vg:2559652"/>
<dbReference type="OrthoDB" id="11234at10239"/>
<dbReference type="Proteomes" id="UP000000854">
    <property type="component" value="Genome"/>
</dbReference>
<dbReference type="InterPro" id="IPR035122">
    <property type="entry name" value="B277"/>
</dbReference>
<dbReference type="Pfam" id="PF17623">
    <property type="entry name" value="B277"/>
    <property type="match status" value="1"/>
</dbReference>
<accession>P20203</accession>
<comment type="function">
    <text evidence="2">This protein may be involved in virus assembly. Essential for virus function.</text>
</comment>
<organismHost>
    <name type="scientific">Saccharolobus solfataricus</name>
    <name type="common">Sulfolobus solfataricus</name>
    <dbReference type="NCBI Taxonomy" id="2287"/>
</organismHost>
<reference key="1">
    <citation type="journal article" date="1991" name="Virology">
        <title>Complete nucleotide sequence of the virus SSV1 of the archaebacterium Sulfolobus shibatae.</title>
        <authorList>
            <person name="Palm P."/>
            <person name="Schleper C."/>
            <person name="Grampp B."/>
            <person name="Yeats S."/>
            <person name="McWilliam P."/>
            <person name="Reiter W.-D."/>
            <person name="Zillig W."/>
        </authorList>
    </citation>
    <scope>NUCLEOTIDE SEQUENCE [GENOMIC DNA]</scope>
</reference>
<reference key="2">
    <citation type="journal article" date="1999" name="Genetics">
        <title>Genetic requirements for the function of the archaeal virus SSV1 in Sulfolobus solfataricus: construction and testing of viral shuttle vectors.</title>
        <authorList>
            <person name="Stedman K.M."/>
            <person name="Schleper C."/>
            <person name="Rumpf E."/>
            <person name="Zillig W."/>
        </authorList>
    </citation>
    <scope>FUNCTION</scope>
</reference>
<protein>
    <recommendedName>
        <fullName>Uncharacterized protein B-277</fullName>
    </recommendedName>
</protein>
<keyword id="KW-1185">Reference proteome</keyword>
<sequence>MSDGKLLSAFEEELRKAQSLEELKQKYEEAQKQIADGKVLKRLYKVYEKRQTELMLQQYRQIKAELEKRKKVKKKDKADIRVRVVKKWINSRLFSAEHYVALLQENQDGLSILFLRRAKLIENQGYLMLEVKKLRKAWVLTAEPILLERLKFPFGKKFVAVHFVLPNYPYTLQLKPDEKLKELAVKAINGPQIMSAMIRTKFFEALARVGSGPDLMMLIIGVVMGIGIGVAIGFGIANANLTHLLSQHVTNTTVTHTTTTTTSPSFTIPSNSSKGVS</sequence>
<name>B277_SSV1</name>
<organism>
    <name type="scientific">Sulfolobus spindle-shape virus 1</name>
    <name type="common">SSV1</name>
    <dbReference type="NCBI Taxonomy" id="244589"/>
    <lineage>
        <taxon>Viruses</taxon>
        <taxon>Viruses incertae sedis</taxon>
        <taxon>Fuselloviridae</taxon>
        <taxon>Alphafusellovirus</taxon>
    </lineage>
</organism>
<proteinExistence type="predicted"/>
<feature type="chain" id="PRO_0000223026" description="Uncharacterized protein B-277">
    <location>
        <begin position="1"/>
        <end position="277"/>
    </location>
</feature>
<feature type="region of interest" description="Disordered" evidence="1">
    <location>
        <begin position="256"/>
        <end position="277"/>
    </location>
</feature>
<gene>
    <name type="ORF">b277</name>
</gene>